<reference key="1">
    <citation type="journal article" date="1996" name="J. Bacteriol.">
        <title>Repressor for the sn-glycerol 3-phosphate regulon of Escherichia coli K-12: primary structure and identification of the DNA-binding domain.</title>
        <authorList>
            <person name="Zeng G."/>
            <person name="Ye S."/>
            <person name="Larson T.J."/>
        </authorList>
    </citation>
    <scope>NUCLEOTIDE SEQUENCE [GENOMIC DNA]</scope>
    <scope>PROTEIN SEQUENCE OF 1-6</scope>
    <source>
        <strain>K12</strain>
    </source>
</reference>
<reference key="2">
    <citation type="journal article" date="1988" name="Nucleic Acids Res.">
        <title>Nucleotide sequence of the glpR gene encoding the repressor for the glycerol-3-phosphate regulon of Escherichia coli K12.</title>
        <authorList>
            <person name="Choi Y.-L."/>
            <person name="Kawase S."/>
            <person name="Nishida T."/>
            <person name="Sakai H."/>
            <person name="Komano T."/>
            <person name="Kawamukai M."/>
            <person name="Utsumi R."/>
            <person name="Kohara Y."/>
            <person name="Akiyama K."/>
        </authorList>
    </citation>
    <scope>NUCLEOTIDE SEQUENCE [GENOMIC DNA]</scope>
    <source>
        <strain>K12</strain>
    </source>
</reference>
<reference key="3">
    <citation type="journal article" date="1997" name="Science">
        <title>The complete genome sequence of Escherichia coli K-12.</title>
        <authorList>
            <person name="Blattner F.R."/>
            <person name="Plunkett G. III"/>
            <person name="Bloch C.A."/>
            <person name="Perna N.T."/>
            <person name="Burland V."/>
            <person name="Riley M."/>
            <person name="Collado-Vides J."/>
            <person name="Glasner J.D."/>
            <person name="Rode C.K."/>
            <person name="Mayhew G.F."/>
            <person name="Gregor J."/>
            <person name="Davis N.W."/>
            <person name="Kirkpatrick H.A."/>
            <person name="Goeden M.A."/>
            <person name="Rose D.J."/>
            <person name="Mau B."/>
            <person name="Shao Y."/>
        </authorList>
    </citation>
    <scope>NUCLEOTIDE SEQUENCE [LARGE SCALE GENOMIC DNA]</scope>
    <source>
        <strain>K12 / MG1655 / ATCC 47076</strain>
    </source>
</reference>
<reference key="4">
    <citation type="journal article" date="2012" name="J. Bacteriol.">
        <title>Newly identified genetic variations in common Escherichia coli MG1655 stock cultures.</title>
        <authorList>
            <person name="Freddolino P.L."/>
            <person name="Amini S."/>
            <person name="Tavazoie S."/>
        </authorList>
    </citation>
    <scope>SEQUENCE REVISION</scope>
    <source>
        <strain>K12 / MG1655 / ATCC 700926</strain>
    </source>
</reference>
<reference key="5">
    <citation type="journal article" date="2006" name="Mol. Syst. Biol.">
        <title>Highly accurate genome sequences of Escherichia coli K-12 strains MG1655 and W3110.</title>
        <authorList>
            <person name="Hayashi K."/>
            <person name="Morooka N."/>
            <person name="Yamamoto Y."/>
            <person name="Fujita K."/>
            <person name="Isono K."/>
            <person name="Choi S."/>
            <person name="Ohtsubo E."/>
            <person name="Baba T."/>
            <person name="Wanner B.L."/>
            <person name="Mori H."/>
            <person name="Horiuchi T."/>
        </authorList>
    </citation>
    <scope>NUCLEOTIDE SEQUENCE [LARGE SCALE GENOMIC DNA]</scope>
    <source>
        <strain>K12 / W3110 / ATCC 27325 / DSM 5911</strain>
    </source>
</reference>
<reference key="6">
    <citation type="journal article" date="1997" name="Electrophoresis">
        <title>Escherichia coli proteome analysis using the gene-protein database.</title>
        <authorList>
            <person name="VanBogelen R.A."/>
            <person name="Abshire K.Z."/>
            <person name="Moldover B."/>
            <person name="Olson E.R."/>
            <person name="Neidhardt F.C."/>
        </authorList>
    </citation>
    <scope>IDENTIFICATION BY 2D-GEL</scope>
</reference>
<accession>P0ACL0</accession>
<accession>P09392</accession>
<accession>Q2M787</accession>
<evidence type="ECO:0000255" key="1">
    <source>
        <dbReference type="PROSITE-ProRule" id="PRU00349"/>
    </source>
</evidence>
<evidence type="ECO:0000305" key="2"/>
<evidence type="ECO:0000305" key="3">
    <source>
    </source>
</evidence>
<comment type="function">
    <text>Repressor of the glycerol-3-phosphate regulon.</text>
</comment>
<comment type="interaction">
    <interactant intactId="EBI-1123685">
        <id>P0ACL0</id>
    </interactant>
    <interactant intactId="EBI-1113137">
        <id>P05847</id>
        <label>ttdA</label>
    </interactant>
    <organismsDiffer>false</organismsDiffer>
    <experiments>2</experiments>
</comment>
<comment type="caution">
    <text evidence="3">A pseudogene in strain MG1655 / ATCC 700926 due to a recent laboratory-derived single nucleotide deletion, but not its parent MG1655 / ATCC 47076.</text>
</comment>
<comment type="sequence caution" evidence="2">
    <conflict type="frameshift">
        <sequence resource="EMBL-CDS" id="CAA30399"/>
    </conflict>
</comment>
<sequence length="252" mass="28048">MKQTQRHNGIIELVKQQGYVSTEELVEHFSVSPQTIRRDLNELAEQNLILRHHGGAALPSSSVNTPWHDRKATQTEEKERIARKVAEQIPNGSTLFIDIGTTPEAVAHALLNHSNLRIVTNNLNVANTLMVKEDFRIILAGGELRSRDGGIIGEATLDFISQFRLDFGILGISGIDSDGSLLEFDYHEVRTKRAIIENSRHVMLVVDHSKFGRNAMVNMGSISMVDAVYTDAPPPVSVMQVLTDHHIQLELC</sequence>
<dbReference type="EMBL" id="M96795">
    <property type="protein sequence ID" value="AAC28167.1"/>
    <property type="molecule type" value="Genomic_DNA"/>
</dbReference>
<dbReference type="EMBL" id="X07520">
    <property type="protein sequence ID" value="CAA30399.1"/>
    <property type="status" value="ALT_FRAME"/>
    <property type="molecule type" value="Genomic_DNA"/>
</dbReference>
<dbReference type="EMBL" id="U18997">
    <property type="protein sequence ID" value="AAA58221.1"/>
    <property type="molecule type" value="Genomic_DNA"/>
</dbReference>
<dbReference type="EMBL" id="U00096">
    <property type="status" value="NOT_ANNOTATED_CDS"/>
    <property type="molecule type" value="Genomic_DNA"/>
</dbReference>
<dbReference type="EMBL" id="AP009048">
    <property type="protein sequence ID" value="BAE77869.1"/>
    <property type="molecule type" value="Genomic_DNA"/>
</dbReference>
<dbReference type="PIR" id="B65138">
    <property type="entry name" value="B65138"/>
</dbReference>
<dbReference type="RefSeq" id="WP_000815099.1">
    <property type="nucleotide sequence ID" value="NZ_STEB01000004.1"/>
</dbReference>
<dbReference type="SMR" id="P0ACL0"/>
<dbReference type="BioGRID" id="4261187">
    <property type="interactions" value="174"/>
</dbReference>
<dbReference type="DIP" id="DIP-9798N"/>
<dbReference type="FunCoup" id="P0ACL0">
    <property type="interactions" value="42"/>
</dbReference>
<dbReference type="IntAct" id="P0ACL0">
    <property type="interactions" value="2"/>
</dbReference>
<dbReference type="jPOST" id="P0ACL0"/>
<dbReference type="KEGG" id="ecj:JW3386"/>
<dbReference type="KEGG" id="ecoc:C3026_18560"/>
<dbReference type="PATRIC" id="fig|83333.103.peg.4322"/>
<dbReference type="EchoBASE" id="EB0395"/>
<dbReference type="eggNOG" id="COG1349">
    <property type="taxonomic scope" value="Bacteria"/>
</dbReference>
<dbReference type="HOGENOM" id="CLU_060699_0_0_6"/>
<dbReference type="InParanoid" id="P0ACL0"/>
<dbReference type="OMA" id="STHEPGF"/>
<dbReference type="OrthoDB" id="9814815at2"/>
<dbReference type="PhylomeDB" id="P0ACL0"/>
<dbReference type="PRO" id="PR:P0ACL0"/>
<dbReference type="Proteomes" id="UP000000625">
    <property type="component" value="Chromosome"/>
</dbReference>
<dbReference type="GO" id="GO:0000987">
    <property type="term" value="F:cis-regulatory region sequence-specific DNA binding"/>
    <property type="evidence" value="ECO:0000314"/>
    <property type="project" value="EcoCyc"/>
</dbReference>
<dbReference type="GO" id="GO:0098531">
    <property type="term" value="F:ligand-modulated transcription factor activity"/>
    <property type="evidence" value="ECO:0000318"/>
    <property type="project" value="GO_Central"/>
</dbReference>
<dbReference type="GO" id="GO:0006071">
    <property type="term" value="P:glycerol metabolic process"/>
    <property type="evidence" value="ECO:0007669"/>
    <property type="project" value="UniProtKB-KW"/>
</dbReference>
<dbReference type="GO" id="GO:0045892">
    <property type="term" value="P:negative regulation of DNA-templated transcription"/>
    <property type="evidence" value="ECO:0000314"/>
    <property type="project" value="EcoCyc"/>
</dbReference>
<dbReference type="GO" id="GO:0006355">
    <property type="term" value="P:regulation of DNA-templated transcription"/>
    <property type="evidence" value="ECO:0000318"/>
    <property type="project" value="GO_Central"/>
</dbReference>
<dbReference type="FunFam" id="1.10.10.10:FF:000081">
    <property type="entry name" value="DeoR/GlpR family transcriptional regulator"/>
    <property type="match status" value="1"/>
</dbReference>
<dbReference type="FunFam" id="3.30.750.70:FF:000001">
    <property type="entry name" value="DeoR/GlpR family transcriptional regulator"/>
    <property type="match status" value="1"/>
</dbReference>
<dbReference type="Gene3D" id="3.30.750.70">
    <property type="entry name" value="4-hydroxybutyrate coenzyme like domains"/>
    <property type="match status" value="1"/>
</dbReference>
<dbReference type="Gene3D" id="1.10.10.10">
    <property type="entry name" value="Winged helix-like DNA-binding domain superfamily/Winged helix DNA-binding domain"/>
    <property type="match status" value="1"/>
</dbReference>
<dbReference type="InterPro" id="IPR050313">
    <property type="entry name" value="Carb_Metab_HTH_regulators"/>
</dbReference>
<dbReference type="InterPro" id="IPR014036">
    <property type="entry name" value="DeoR-like_C"/>
</dbReference>
<dbReference type="InterPro" id="IPR001034">
    <property type="entry name" value="DeoR_HTH"/>
</dbReference>
<dbReference type="InterPro" id="IPR037171">
    <property type="entry name" value="NagB/RpiA_transferase-like"/>
</dbReference>
<dbReference type="InterPro" id="IPR018356">
    <property type="entry name" value="Tscrpt_reg_HTH_DeoR_CS"/>
</dbReference>
<dbReference type="InterPro" id="IPR036388">
    <property type="entry name" value="WH-like_DNA-bd_sf"/>
</dbReference>
<dbReference type="InterPro" id="IPR036390">
    <property type="entry name" value="WH_DNA-bd_sf"/>
</dbReference>
<dbReference type="NCBIfam" id="NF008154">
    <property type="entry name" value="PRK10906.1"/>
    <property type="match status" value="1"/>
</dbReference>
<dbReference type="PANTHER" id="PTHR30363:SF4">
    <property type="entry name" value="GLYCEROL-3-PHOSPHATE REGULON REPRESSOR"/>
    <property type="match status" value="1"/>
</dbReference>
<dbReference type="PANTHER" id="PTHR30363">
    <property type="entry name" value="HTH-TYPE TRANSCRIPTIONAL REGULATOR SRLR-RELATED"/>
    <property type="match status" value="1"/>
</dbReference>
<dbReference type="Pfam" id="PF00455">
    <property type="entry name" value="DeoRC"/>
    <property type="match status" value="1"/>
</dbReference>
<dbReference type="Pfam" id="PF08220">
    <property type="entry name" value="HTH_DeoR"/>
    <property type="match status" value="1"/>
</dbReference>
<dbReference type="PRINTS" id="PR00037">
    <property type="entry name" value="HTHLACR"/>
</dbReference>
<dbReference type="SMART" id="SM01134">
    <property type="entry name" value="DeoRC"/>
    <property type="match status" value="1"/>
</dbReference>
<dbReference type="SMART" id="SM00420">
    <property type="entry name" value="HTH_DEOR"/>
    <property type="match status" value="1"/>
</dbReference>
<dbReference type="SUPFAM" id="SSF100950">
    <property type="entry name" value="NagB/RpiA/CoA transferase-like"/>
    <property type="match status" value="1"/>
</dbReference>
<dbReference type="SUPFAM" id="SSF46785">
    <property type="entry name" value="Winged helix' DNA-binding domain"/>
    <property type="match status" value="1"/>
</dbReference>
<dbReference type="PROSITE" id="PS00894">
    <property type="entry name" value="HTH_DEOR_1"/>
    <property type="match status" value="1"/>
</dbReference>
<dbReference type="PROSITE" id="PS51000">
    <property type="entry name" value="HTH_DEOR_2"/>
    <property type="match status" value="1"/>
</dbReference>
<keyword id="KW-0903">Direct protein sequencing</keyword>
<keyword id="KW-0238">DNA-binding</keyword>
<keyword id="KW-0319">Glycerol metabolism</keyword>
<keyword id="KW-1185">Reference proteome</keyword>
<keyword id="KW-0678">Repressor</keyword>
<keyword id="KW-0804">Transcription</keyword>
<keyword id="KW-0805">Transcription regulation</keyword>
<feature type="chain" id="PRO_0000050251" description="Glycerol-3-phosphate regulon repressor">
    <location>
        <begin position="1"/>
        <end position="252"/>
    </location>
</feature>
<feature type="domain" description="HTH deoR-type" evidence="1">
    <location>
        <begin position="3"/>
        <end position="58"/>
    </location>
</feature>
<feature type="DNA-binding region" description="H-T-H motif" evidence="1">
    <location>
        <begin position="20"/>
        <end position="39"/>
    </location>
</feature>
<feature type="sequence conflict" description="In Ref. 2." evidence="2" ref="2">
    <original>A</original>
    <variation>R</variation>
    <location>
        <position position="155"/>
    </location>
</feature>
<feature type="sequence conflict" description="In Ref. 2." evidence="2" ref="2">
    <original>P</original>
    <variation>PP</variation>
    <location>
        <position position="235"/>
    </location>
</feature>
<organism>
    <name type="scientific">Escherichia coli (strain K12)</name>
    <dbReference type="NCBI Taxonomy" id="83333"/>
    <lineage>
        <taxon>Bacteria</taxon>
        <taxon>Pseudomonadati</taxon>
        <taxon>Pseudomonadota</taxon>
        <taxon>Gammaproteobacteria</taxon>
        <taxon>Enterobacterales</taxon>
        <taxon>Enterobacteriaceae</taxon>
        <taxon>Escherichia</taxon>
    </lineage>
</organism>
<name>GLPR_ECOLI</name>
<gene>
    <name type="primary">glpR</name>
    <name type="ordered locus">b3423</name>
    <name type="ordered locus">JW3386</name>
</gene>
<protein>
    <recommendedName>
        <fullName>Glycerol-3-phosphate regulon repressor</fullName>
    </recommendedName>
</protein>
<proteinExistence type="evidence at protein level"/>